<proteinExistence type="inferred from homology"/>
<feature type="chain" id="PRO_0000298002" description="S-ribosylhomocysteine lyase">
    <location>
        <begin position="1"/>
        <end position="155"/>
    </location>
</feature>
<feature type="binding site" evidence="1">
    <location>
        <position position="58"/>
    </location>
    <ligand>
        <name>Fe cation</name>
        <dbReference type="ChEBI" id="CHEBI:24875"/>
    </ligand>
</feature>
<feature type="binding site" evidence="1">
    <location>
        <position position="62"/>
    </location>
    <ligand>
        <name>Fe cation</name>
        <dbReference type="ChEBI" id="CHEBI:24875"/>
    </ligand>
</feature>
<feature type="binding site" evidence="1">
    <location>
        <position position="125"/>
    </location>
    <ligand>
        <name>Fe cation</name>
        <dbReference type="ChEBI" id="CHEBI:24875"/>
    </ligand>
</feature>
<organism>
    <name type="scientific">Helicobacter pylori (strain HPAG1)</name>
    <dbReference type="NCBI Taxonomy" id="357544"/>
    <lineage>
        <taxon>Bacteria</taxon>
        <taxon>Pseudomonadati</taxon>
        <taxon>Campylobacterota</taxon>
        <taxon>Epsilonproteobacteria</taxon>
        <taxon>Campylobacterales</taxon>
        <taxon>Helicobacteraceae</taxon>
        <taxon>Helicobacter</taxon>
    </lineage>
</organism>
<comment type="function">
    <text evidence="1">Involved in the synthesis of autoinducer 2 (AI-2) which is secreted by bacteria and is used to communicate both the cell density and the metabolic potential of the environment. The regulation of gene expression in response to changes in cell density is called quorum sensing. Catalyzes the transformation of S-ribosylhomocysteine (RHC) to homocysteine (HC) and 4,5-dihydroxy-2,3-pentadione (DPD).</text>
</comment>
<comment type="catalytic activity">
    <reaction evidence="1">
        <text>S-(5-deoxy-D-ribos-5-yl)-L-homocysteine = (S)-4,5-dihydroxypentane-2,3-dione + L-homocysteine</text>
        <dbReference type="Rhea" id="RHEA:17753"/>
        <dbReference type="ChEBI" id="CHEBI:29484"/>
        <dbReference type="ChEBI" id="CHEBI:58195"/>
        <dbReference type="ChEBI" id="CHEBI:58199"/>
        <dbReference type="EC" id="4.4.1.21"/>
    </reaction>
</comment>
<comment type="cofactor">
    <cofactor evidence="1">
        <name>Fe cation</name>
        <dbReference type="ChEBI" id="CHEBI:24875"/>
    </cofactor>
    <text evidence="1">Binds 1 Fe cation per subunit.</text>
</comment>
<comment type="subunit">
    <text evidence="1">Homodimer.</text>
</comment>
<comment type="similarity">
    <text evidence="1">Belongs to the LuxS family.</text>
</comment>
<keyword id="KW-0071">Autoinducer synthesis</keyword>
<keyword id="KW-0408">Iron</keyword>
<keyword id="KW-0456">Lyase</keyword>
<keyword id="KW-0479">Metal-binding</keyword>
<keyword id="KW-0673">Quorum sensing</keyword>
<sequence>MKTPKMNVESFNLDHTKVKAPYVRVADRKKGANGDVIVKYDVRFKQPNQDHMDMPSLHSLEHLVAEIIRNHASYVVDWSPMGCQTGFYLTVLNHDNYTEILEVLEKTMQDVLKAKEVPASNEKQCGWAANHTLEGAQNLARTFLDKRAEWSEVGV</sequence>
<reference key="1">
    <citation type="journal article" date="2006" name="Proc. Natl. Acad. Sci. U.S.A.">
        <title>The complete genome sequence of a chronic atrophic gastritis Helicobacter pylori strain: evolution during disease progression.</title>
        <authorList>
            <person name="Oh J.D."/>
            <person name="Kling-Baeckhed H."/>
            <person name="Giannakis M."/>
            <person name="Xu J."/>
            <person name="Fulton R.S."/>
            <person name="Fulton L.A."/>
            <person name="Cordum H.S."/>
            <person name="Wang C."/>
            <person name="Elliott G."/>
            <person name="Edwards J."/>
            <person name="Mardis E.R."/>
            <person name="Engstrand L.G."/>
            <person name="Gordon J.I."/>
        </authorList>
    </citation>
    <scope>NUCLEOTIDE SEQUENCE [LARGE SCALE GENOMIC DNA]</scope>
    <source>
        <strain>HPAG1</strain>
    </source>
</reference>
<evidence type="ECO:0000255" key="1">
    <source>
        <dbReference type="HAMAP-Rule" id="MF_00091"/>
    </source>
</evidence>
<gene>
    <name evidence="1" type="primary">luxS</name>
    <name type="ordered locus">HPAG1_0105</name>
</gene>
<accession>Q1CV50</accession>
<dbReference type="EC" id="4.4.1.21" evidence="1"/>
<dbReference type="EMBL" id="CP000241">
    <property type="protein sequence ID" value="ABF84172.1"/>
    <property type="molecule type" value="Genomic_DNA"/>
</dbReference>
<dbReference type="RefSeq" id="WP_000856663.1">
    <property type="nucleotide sequence ID" value="NC_008086.1"/>
</dbReference>
<dbReference type="SMR" id="Q1CV50"/>
<dbReference type="KEGG" id="hpa:HPAG1_0105"/>
<dbReference type="HOGENOM" id="CLU_107531_2_0_7"/>
<dbReference type="GO" id="GO:0005506">
    <property type="term" value="F:iron ion binding"/>
    <property type="evidence" value="ECO:0007669"/>
    <property type="project" value="InterPro"/>
</dbReference>
<dbReference type="GO" id="GO:0043768">
    <property type="term" value="F:S-ribosylhomocysteine lyase activity"/>
    <property type="evidence" value="ECO:0007669"/>
    <property type="project" value="UniProtKB-UniRule"/>
</dbReference>
<dbReference type="GO" id="GO:0009372">
    <property type="term" value="P:quorum sensing"/>
    <property type="evidence" value="ECO:0007669"/>
    <property type="project" value="UniProtKB-UniRule"/>
</dbReference>
<dbReference type="Gene3D" id="3.30.1360.80">
    <property type="entry name" value="S-ribosylhomocysteinase (LuxS)"/>
    <property type="match status" value="1"/>
</dbReference>
<dbReference type="HAMAP" id="MF_00091">
    <property type="entry name" value="LuxS"/>
    <property type="match status" value="1"/>
</dbReference>
<dbReference type="InterPro" id="IPR037005">
    <property type="entry name" value="LuxS_sf"/>
</dbReference>
<dbReference type="InterPro" id="IPR011249">
    <property type="entry name" value="Metalloenz_LuxS/M16"/>
</dbReference>
<dbReference type="InterPro" id="IPR003815">
    <property type="entry name" value="S-ribosylhomocysteinase"/>
</dbReference>
<dbReference type="NCBIfam" id="NF002604">
    <property type="entry name" value="PRK02260.1-4"/>
    <property type="match status" value="1"/>
</dbReference>
<dbReference type="PANTHER" id="PTHR35799">
    <property type="entry name" value="S-RIBOSYLHOMOCYSTEINE LYASE"/>
    <property type="match status" value="1"/>
</dbReference>
<dbReference type="PANTHER" id="PTHR35799:SF1">
    <property type="entry name" value="S-RIBOSYLHOMOCYSTEINE LYASE"/>
    <property type="match status" value="1"/>
</dbReference>
<dbReference type="Pfam" id="PF02664">
    <property type="entry name" value="LuxS"/>
    <property type="match status" value="1"/>
</dbReference>
<dbReference type="PIRSF" id="PIRSF006160">
    <property type="entry name" value="AI2"/>
    <property type="match status" value="1"/>
</dbReference>
<dbReference type="PRINTS" id="PR01487">
    <property type="entry name" value="LUXSPROTEIN"/>
</dbReference>
<dbReference type="SUPFAM" id="SSF63411">
    <property type="entry name" value="LuxS/MPP-like metallohydrolase"/>
    <property type="match status" value="1"/>
</dbReference>
<protein>
    <recommendedName>
        <fullName evidence="1">S-ribosylhomocysteine lyase</fullName>
        <ecNumber evidence="1">4.4.1.21</ecNumber>
    </recommendedName>
    <alternativeName>
        <fullName evidence="1">AI-2 synthesis protein</fullName>
    </alternativeName>
    <alternativeName>
        <fullName evidence="1">Autoinducer-2 production protein LuxS</fullName>
    </alternativeName>
</protein>
<name>LUXS_HELPH</name>